<proteinExistence type="inferred from homology"/>
<dbReference type="EC" id="4.2.1.9" evidence="1"/>
<dbReference type="EMBL" id="CP000606">
    <property type="protein sequence ID" value="ABO22164.1"/>
    <property type="molecule type" value="Genomic_DNA"/>
</dbReference>
<dbReference type="RefSeq" id="WP_011864098.1">
    <property type="nucleotide sequence ID" value="NC_009092.1"/>
</dbReference>
<dbReference type="SMR" id="A3Q9L6"/>
<dbReference type="STRING" id="323850.Shew_0292"/>
<dbReference type="KEGG" id="slo:Shew_0292"/>
<dbReference type="eggNOG" id="COG0129">
    <property type="taxonomic scope" value="Bacteria"/>
</dbReference>
<dbReference type="HOGENOM" id="CLU_014271_4_2_6"/>
<dbReference type="OrthoDB" id="9807077at2"/>
<dbReference type="UniPathway" id="UPA00047">
    <property type="reaction ID" value="UER00057"/>
</dbReference>
<dbReference type="UniPathway" id="UPA00049">
    <property type="reaction ID" value="UER00061"/>
</dbReference>
<dbReference type="Proteomes" id="UP000001558">
    <property type="component" value="Chromosome"/>
</dbReference>
<dbReference type="GO" id="GO:0005829">
    <property type="term" value="C:cytosol"/>
    <property type="evidence" value="ECO:0007669"/>
    <property type="project" value="TreeGrafter"/>
</dbReference>
<dbReference type="GO" id="GO:0051537">
    <property type="term" value="F:2 iron, 2 sulfur cluster binding"/>
    <property type="evidence" value="ECO:0007669"/>
    <property type="project" value="UniProtKB-UniRule"/>
</dbReference>
<dbReference type="GO" id="GO:0004160">
    <property type="term" value="F:dihydroxy-acid dehydratase activity"/>
    <property type="evidence" value="ECO:0007669"/>
    <property type="project" value="UniProtKB-UniRule"/>
</dbReference>
<dbReference type="GO" id="GO:0000287">
    <property type="term" value="F:magnesium ion binding"/>
    <property type="evidence" value="ECO:0007669"/>
    <property type="project" value="UniProtKB-UniRule"/>
</dbReference>
<dbReference type="GO" id="GO:0009097">
    <property type="term" value="P:isoleucine biosynthetic process"/>
    <property type="evidence" value="ECO:0007669"/>
    <property type="project" value="UniProtKB-UniRule"/>
</dbReference>
<dbReference type="GO" id="GO:0009099">
    <property type="term" value="P:L-valine biosynthetic process"/>
    <property type="evidence" value="ECO:0007669"/>
    <property type="project" value="UniProtKB-UniRule"/>
</dbReference>
<dbReference type="FunFam" id="3.50.30.80:FF:000001">
    <property type="entry name" value="Dihydroxy-acid dehydratase"/>
    <property type="match status" value="1"/>
</dbReference>
<dbReference type="Gene3D" id="3.50.30.80">
    <property type="entry name" value="IlvD/EDD C-terminal domain-like"/>
    <property type="match status" value="1"/>
</dbReference>
<dbReference type="HAMAP" id="MF_00012">
    <property type="entry name" value="IlvD"/>
    <property type="match status" value="1"/>
</dbReference>
<dbReference type="InterPro" id="IPR042096">
    <property type="entry name" value="Dihydro-acid_dehy_C"/>
</dbReference>
<dbReference type="InterPro" id="IPR004404">
    <property type="entry name" value="DihydroxyA_deHydtase"/>
</dbReference>
<dbReference type="InterPro" id="IPR020558">
    <property type="entry name" value="DiOHA_6PGluconate_deHydtase_CS"/>
</dbReference>
<dbReference type="InterPro" id="IPR056740">
    <property type="entry name" value="ILV_EDD_C"/>
</dbReference>
<dbReference type="InterPro" id="IPR000581">
    <property type="entry name" value="ILV_EDD_N"/>
</dbReference>
<dbReference type="InterPro" id="IPR037237">
    <property type="entry name" value="IlvD/EDD_N"/>
</dbReference>
<dbReference type="NCBIfam" id="TIGR00110">
    <property type="entry name" value="ilvD"/>
    <property type="match status" value="1"/>
</dbReference>
<dbReference type="NCBIfam" id="NF009103">
    <property type="entry name" value="PRK12448.1"/>
    <property type="match status" value="1"/>
</dbReference>
<dbReference type="PANTHER" id="PTHR43661">
    <property type="entry name" value="D-XYLONATE DEHYDRATASE"/>
    <property type="match status" value="1"/>
</dbReference>
<dbReference type="PANTHER" id="PTHR43661:SF3">
    <property type="entry name" value="D-XYLONATE DEHYDRATASE YAGF-RELATED"/>
    <property type="match status" value="1"/>
</dbReference>
<dbReference type="Pfam" id="PF24877">
    <property type="entry name" value="ILV_EDD_C"/>
    <property type="match status" value="1"/>
</dbReference>
<dbReference type="Pfam" id="PF00920">
    <property type="entry name" value="ILVD_EDD_N"/>
    <property type="match status" value="1"/>
</dbReference>
<dbReference type="SUPFAM" id="SSF143975">
    <property type="entry name" value="IlvD/EDD N-terminal domain-like"/>
    <property type="match status" value="1"/>
</dbReference>
<dbReference type="SUPFAM" id="SSF52016">
    <property type="entry name" value="LeuD/IlvD-like"/>
    <property type="match status" value="1"/>
</dbReference>
<dbReference type="PROSITE" id="PS00886">
    <property type="entry name" value="ILVD_EDD_1"/>
    <property type="match status" value="1"/>
</dbReference>
<dbReference type="PROSITE" id="PS00887">
    <property type="entry name" value="ILVD_EDD_2"/>
    <property type="match status" value="1"/>
</dbReference>
<keyword id="KW-0001">2Fe-2S</keyword>
<keyword id="KW-0028">Amino-acid biosynthesis</keyword>
<keyword id="KW-0100">Branched-chain amino acid biosynthesis</keyword>
<keyword id="KW-0408">Iron</keyword>
<keyword id="KW-0411">Iron-sulfur</keyword>
<keyword id="KW-0456">Lyase</keyword>
<keyword id="KW-0460">Magnesium</keyword>
<keyword id="KW-0479">Metal-binding</keyword>
<keyword id="KW-1185">Reference proteome</keyword>
<sequence>MAKLRSATSTQGRNMAGARALWRATGVKDSDFGKPIVAIANSFTQFVPGHVHLKDMGSLVAGAIEEAGGIAKEFNTIAVDDGIAMGHGGMLYSLPSRELIADSVEYMVNAHCADALVCISNCDKITPGMLMAALRLNIPVVFVSGGPMEAGKTKLSDKLIKLDLVDAMVAAADDRVSDEDSEKIERSACPTCGSCSGMFTANSMNCLTEALGLSLPGNGSLLATHSDRRELFLEAGRRVMALANRYYRDDDESALPRNIASFKAFENAMALDIAMGGSSNTVLHLLAAAQEAKVDFTMADIDRLSRQVPHLCKVAPSTPKYHMEDVHRAGGVMGILGELDRAGLLHTDVSHVAGENLKAVLVQYDLVQTQDEAVQQFYAAGPAGIPTTKAFSQSCRWPSLDVDRQEGCIRTREFAFSQEGGLAVLSGNIAADGCIVKTAGVDEANHTFVGHARVYESQDDAVAGILGGEVVAGDVVVIRYEGPKGGPGMQEMLYPTSYLKSKGLGTSCALITDGRFSGGTSGLSIGHVSPEAAAGGTIALVETGDRIEIDIPARSITLAVSDEVLETRRQAMQARGKQAWKPVNRERSVSLALKAYAMLATSADKGAVRDVSKLED</sequence>
<evidence type="ECO:0000255" key="1">
    <source>
        <dbReference type="HAMAP-Rule" id="MF_00012"/>
    </source>
</evidence>
<organism>
    <name type="scientific">Shewanella loihica (strain ATCC BAA-1088 / PV-4)</name>
    <dbReference type="NCBI Taxonomy" id="323850"/>
    <lineage>
        <taxon>Bacteria</taxon>
        <taxon>Pseudomonadati</taxon>
        <taxon>Pseudomonadota</taxon>
        <taxon>Gammaproteobacteria</taxon>
        <taxon>Alteromonadales</taxon>
        <taxon>Shewanellaceae</taxon>
        <taxon>Shewanella</taxon>
    </lineage>
</organism>
<protein>
    <recommendedName>
        <fullName evidence="1">Dihydroxy-acid dehydratase</fullName>
        <shortName evidence="1">DAD</shortName>
        <ecNumber evidence="1">4.2.1.9</ecNumber>
    </recommendedName>
</protein>
<feature type="chain" id="PRO_1000001054" description="Dihydroxy-acid dehydratase">
    <location>
        <begin position="1"/>
        <end position="616"/>
    </location>
</feature>
<feature type="active site" description="Proton acceptor" evidence="1">
    <location>
        <position position="517"/>
    </location>
</feature>
<feature type="binding site" evidence="1">
    <location>
        <position position="81"/>
    </location>
    <ligand>
        <name>Mg(2+)</name>
        <dbReference type="ChEBI" id="CHEBI:18420"/>
    </ligand>
</feature>
<feature type="binding site" evidence="1">
    <location>
        <position position="122"/>
    </location>
    <ligand>
        <name>[2Fe-2S] cluster</name>
        <dbReference type="ChEBI" id="CHEBI:190135"/>
    </ligand>
</feature>
<feature type="binding site" evidence="1">
    <location>
        <position position="123"/>
    </location>
    <ligand>
        <name>Mg(2+)</name>
        <dbReference type="ChEBI" id="CHEBI:18420"/>
    </ligand>
</feature>
<feature type="binding site" description="via carbamate group" evidence="1">
    <location>
        <position position="124"/>
    </location>
    <ligand>
        <name>Mg(2+)</name>
        <dbReference type="ChEBI" id="CHEBI:18420"/>
    </ligand>
</feature>
<feature type="binding site" evidence="1">
    <location>
        <position position="195"/>
    </location>
    <ligand>
        <name>[2Fe-2S] cluster</name>
        <dbReference type="ChEBI" id="CHEBI:190135"/>
    </ligand>
</feature>
<feature type="binding site" evidence="1">
    <location>
        <position position="491"/>
    </location>
    <ligand>
        <name>Mg(2+)</name>
        <dbReference type="ChEBI" id="CHEBI:18420"/>
    </ligand>
</feature>
<feature type="modified residue" description="N6-carboxylysine" evidence="1">
    <location>
        <position position="124"/>
    </location>
</feature>
<gene>
    <name evidence="1" type="primary">ilvD</name>
    <name type="ordered locus">Shew_0292</name>
</gene>
<accession>A3Q9L6</accession>
<comment type="function">
    <text evidence="1">Functions in the biosynthesis of branched-chain amino acids. Catalyzes the dehydration of (2R,3R)-2,3-dihydroxy-3-methylpentanoate (2,3-dihydroxy-3-methylvalerate) into 2-oxo-3-methylpentanoate (2-oxo-3-methylvalerate) and of (2R)-2,3-dihydroxy-3-methylbutanoate (2,3-dihydroxyisovalerate) into 2-oxo-3-methylbutanoate (2-oxoisovalerate), the penultimate precursor to L-isoleucine and L-valine, respectively.</text>
</comment>
<comment type="catalytic activity">
    <reaction evidence="1">
        <text>(2R)-2,3-dihydroxy-3-methylbutanoate = 3-methyl-2-oxobutanoate + H2O</text>
        <dbReference type="Rhea" id="RHEA:24809"/>
        <dbReference type="ChEBI" id="CHEBI:11851"/>
        <dbReference type="ChEBI" id="CHEBI:15377"/>
        <dbReference type="ChEBI" id="CHEBI:49072"/>
        <dbReference type="EC" id="4.2.1.9"/>
    </reaction>
    <physiologicalReaction direction="left-to-right" evidence="1">
        <dbReference type="Rhea" id="RHEA:24810"/>
    </physiologicalReaction>
</comment>
<comment type="catalytic activity">
    <reaction evidence="1">
        <text>(2R,3R)-2,3-dihydroxy-3-methylpentanoate = (S)-3-methyl-2-oxopentanoate + H2O</text>
        <dbReference type="Rhea" id="RHEA:27694"/>
        <dbReference type="ChEBI" id="CHEBI:15377"/>
        <dbReference type="ChEBI" id="CHEBI:35146"/>
        <dbReference type="ChEBI" id="CHEBI:49258"/>
        <dbReference type="EC" id="4.2.1.9"/>
    </reaction>
    <physiologicalReaction direction="left-to-right" evidence="1">
        <dbReference type="Rhea" id="RHEA:27695"/>
    </physiologicalReaction>
</comment>
<comment type="cofactor">
    <cofactor evidence="1">
        <name>[2Fe-2S] cluster</name>
        <dbReference type="ChEBI" id="CHEBI:190135"/>
    </cofactor>
    <text evidence="1">Binds 1 [2Fe-2S] cluster per subunit. This cluster acts as a Lewis acid cofactor.</text>
</comment>
<comment type="cofactor">
    <cofactor evidence="1">
        <name>Mg(2+)</name>
        <dbReference type="ChEBI" id="CHEBI:18420"/>
    </cofactor>
</comment>
<comment type="pathway">
    <text evidence="1">Amino-acid biosynthesis; L-isoleucine biosynthesis; L-isoleucine from 2-oxobutanoate: step 3/4.</text>
</comment>
<comment type="pathway">
    <text evidence="1">Amino-acid biosynthesis; L-valine biosynthesis; L-valine from pyruvate: step 3/4.</text>
</comment>
<comment type="subunit">
    <text evidence="1">Homodimer.</text>
</comment>
<comment type="similarity">
    <text evidence="1">Belongs to the IlvD/Edd family.</text>
</comment>
<reference key="1">
    <citation type="submission" date="2007-03" db="EMBL/GenBank/DDBJ databases">
        <title>Complete sequence of Shewanella loihica PV-4.</title>
        <authorList>
            <consortium name="US DOE Joint Genome Institute"/>
            <person name="Copeland A."/>
            <person name="Lucas S."/>
            <person name="Lapidus A."/>
            <person name="Barry K."/>
            <person name="Detter J.C."/>
            <person name="Glavina del Rio T."/>
            <person name="Hammon N."/>
            <person name="Israni S."/>
            <person name="Dalin E."/>
            <person name="Tice H."/>
            <person name="Pitluck S."/>
            <person name="Chain P."/>
            <person name="Malfatti S."/>
            <person name="Shin M."/>
            <person name="Vergez L."/>
            <person name="Schmutz J."/>
            <person name="Larimer F."/>
            <person name="Land M."/>
            <person name="Hauser L."/>
            <person name="Kyrpides N."/>
            <person name="Mikhailova N."/>
            <person name="Romine M.F."/>
            <person name="Serres G."/>
            <person name="Fredrickson J."/>
            <person name="Tiedje J."/>
            <person name="Richardson P."/>
        </authorList>
    </citation>
    <scope>NUCLEOTIDE SEQUENCE [LARGE SCALE GENOMIC DNA]</scope>
    <source>
        <strain>ATCC BAA-1088 / PV-4</strain>
    </source>
</reference>
<name>ILVD_SHELP</name>